<keyword id="KW-0046">Antibiotic resistance</keyword>
<keyword id="KW-0997">Cell inner membrane</keyword>
<keyword id="KW-1003">Cell membrane</keyword>
<keyword id="KW-0133">Cell shape</keyword>
<keyword id="KW-0961">Cell wall biogenesis/degradation</keyword>
<keyword id="KW-0378">Hydrolase</keyword>
<keyword id="KW-0472">Membrane</keyword>
<keyword id="KW-0573">Peptidoglycan synthesis</keyword>
<keyword id="KW-0812">Transmembrane</keyword>
<keyword id="KW-1133">Transmembrane helix</keyword>
<name>UPPP_YERPB</name>
<proteinExistence type="inferred from homology"/>
<feature type="chain" id="PRO_1000197422" description="Undecaprenyl-diphosphatase">
    <location>
        <begin position="1"/>
        <end position="272"/>
    </location>
</feature>
<feature type="transmembrane region" description="Helical" evidence="1">
    <location>
        <begin position="5"/>
        <end position="25"/>
    </location>
</feature>
<feature type="transmembrane region" description="Helical" evidence="1">
    <location>
        <begin position="45"/>
        <end position="65"/>
    </location>
</feature>
<feature type="transmembrane region" description="Helical" evidence="1">
    <location>
        <begin position="88"/>
        <end position="108"/>
    </location>
</feature>
<feature type="transmembrane region" description="Helical" evidence="1">
    <location>
        <begin position="114"/>
        <end position="134"/>
    </location>
</feature>
<feature type="transmembrane region" description="Helical" evidence="1">
    <location>
        <begin position="153"/>
        <end position="172"/>
    </location>
</feature>
<feature type="transmembrane region" description="Helical" evidence="1">
    <location>
        <begin position="189"/>
        <end position="209"/>
    </location>
</feature>
<feature type="transmembrane region" description="Helical" evidence="1">
    <location>
        <begin position="221"/>
        <end position="241"/>
    </location>
</feature>
<feature type="transmembrane region" description="Helical" evidence="1">
    <location>
        <begin position="251"/>
        <end position="271"/>
    </location>
</feature>
<protein>
    <recommendedName>
        <fullName evidence="1">Undecaprenyl-diphosphatase</fullName>
        <ecNumber evidence="1">3.6.1.27</ecNumber>
    </recommendedName>
    <alternativeName>
        <fullName evidence="1">Bacitracin resistance protein</fullName>
    </alternativeName>
    <alternativeName>
        <fullName evidence="1">Undecaprenyl pyrophosphate phosphatase</fullName>
    </alternativeName>
</protein>
<gene>
    <name evidence="1" type="primary">uppP</name>
    <name type="ordered locus">YPTS_3556</name>
</gene>
<evidence type="ECO:0000255" key="1">
    <source>
        <dbReference type="HAMAP-Rule" id="MF_01006"/>
    </source>
</evidence>
<organism>
    <name type="scientific">Yersinia pseudotuberculosis serotype IB (strain PB1/+)</name>
    <dbReference type="NCBI Taxonomy" id="502801"/>
    <lineage>
        <taxon>Bacteria</taxon>
        <taxon>Pseudomonadati</taxon>
        <taxon>Pseudomonadota</taxon>
        <taxon>Gammaproteobacteria</taxon>
        <taxon>Enterobacterales</taxon>
        <taxon>Yersiniaceae</taxon>
        <taxon>Yersinia</taxon>
    </lineage>
</organism>
<reference key="1">
    <citation type="submission" date="2008-04" db="EMBL/GenBank/DDBJ databases">
        <title>Complete sequence of Yersinia pseudotuberculosis PB1/+.</title>
        <authorList>
            <person name="Copeland A."/>
            <person name="Lucas S."/>
            <person name="Lapidus A."/>
            <person name="Glavina del Rio T."/>
            <person name="Dalin E."/>
            <person name="Tice H."/>
            <person name="Bruce D."/>
            <person name="Goodwin L."/>
            <person name="Pitluck S."/>
            <person name="Munk A.C."/>
            <person name="Brettin T."/>
            <person name="Detter J.C."/>
            <person name="Han C."/>
            <person name="Tapia R."/>
            <person name="Schmutz J."/>
            <person name="Larimer F."/>
            <person name="Land M."/>
            <person name="Hauser L."/>
            <person name="Challacombe J.F."/>
            <person name="Green L."/>
            <person name="Lindler L.E."/>
            <person name="Nikolich M.P."/>
            <person name="Richardson P."/>
        </authorList>
    </citation>
    <scope>NUCLEOTIDE SEQUENCE [LARGE SCALE GENOMIC DNA]</scope>
    <source>
        <strain>PB1/+</strain>
    </source>
</reference>
<accession>B2K2I0</accession>
<dbReference type="EC" id="3.6.1.27" evidence="1"/>
<dbReference type="EMBL" id="CP001048">
    <property type="protein sequence ID" value="ACC90509.1"/>
    <property type="molecule type" value="Genomic_DNA"/>
</dbReference>
<dbReference type="SMR" id="B2K2I0"/>
<dbReference type="KEGG" id="ypb:YPTS_3556"/>
<dbReference type="PATRIC" id="fig|502801.10.peg.3003"/>
<dbReference type="GO" id="GO:0005886">
    <property type="term" value="C:plasma membrane"/>
    <property type="evidence" value="ECO:0007669"/>
    <property type="project" value="UniProtKB-SubCell"/>
</dbReference>
<dbReference type="GO" id="GO:0050380">
    <property type="term" value="F:undecaprenyl-diphosphatase activity"/>
    <property type="evidence" value="ECO:0007669"/>
    <property type="project" value="UniProtKB-UniRule"/>
</dbReference>
<dbReference type="GO" id="GO:0071555">
    <property type="term" value="P:cell wall organization"/>
    <property type="evidence" value="ECO:0007669"/>
    <property type="project" value="UniProtKB-KW"/>
</dbReference>
<dbReference type="GO" id="GO:0009252">
    <property type="term" value="P:peptidoglycan biosynthetic process"/>
    <property type="evidence" value="ECO:0007669"/>
    <property type="project" value="UniProtKB-KW"/>
</dbReference>
<dbReference type="GO" id="GO:0008360">
    <property type="term" value="P:regulation of cell shape"/>
    <property type="evidence" value="ECO:0007669"/>
    <property type="project" value="UniProtKB-KW"/>
</dbReference>
<dbReference type="GO" id="GO:0046677">
    <property type="term" value="P:response to antibiotic"/>
    <property type="evidence" value="ECO:0007669"/>
    <property type="project" value="UniProtKB-UniRule"/>
</dbReference>
<dbReference type="HAMAP" id="MF_01006">
    <property type="entry name" value="Undec_diphosphatase"/>
    <property type="match status" value="1"/>
</dbReference>
<dbReference type="InterPro" id="IPR003824">
    <property type="entry name" value="UppP"/>
</dbReference>
<dbReference type="NCBIfam" id="NF001388">
    <property type="entry name" value="PRK00281.1-1"/>
    <property type="match status" value="1"/>
</dbReference>
<dbReference type="NCBIfam" id="NF001389">
    <property type="entry name" value="PRK00281.1-2"/>
    <property type="match status" value="1"/>
</dbReference>
<dbReference type="NCBIfam" id="NF001390">
    <property type="entry name" value="PRK00281.1-4"/>
    <property type="match status" value="1"/>
</dbReference>
<dbReference type="NCBIfam" id="TIGR00753">
    <property type="entry name" value="undec_PP_bacA"/>
    <property type="match status" value="1"/>
</dbReference>
<dbReference type="PANTHER" id="PTHR30622">
    <property type="entry name" value="UNDECAPRENYL-DIPHOSPHATASE"/>
    <property type="match status" value="1"/>
</dbReference>
<dbReference type="PANTHER" id="PTHR30622:SF3">
    <property type="entry name" value="UNDECAPRENYL-DIPHOSPHATASE"/>
    <property type="match status" value="1"/>
</dbReference>
<dbReference type="Pfam" id="PF02673">
    <property type="entry name" value="BacA"/>
    <property type="match status" value="1"/>
</dbReference>
<comment type="function">
    <text evidence="1">Catalyzes the dephosphorylation of undecaprenyl diphosphate (UPP). Confers resistance to bacitracin.</text>
</comment>
<comment type="catalytic activity">
    <reaction evidence="1">
        <text>di-trans,octa-cis-undecaprenyl diphosphate + H2O = di-trans,octa-cis-undecaprenyl phosphate + phosphate + H(+)</text>
        <dbReference type="Rhea" id="RHEA:28094"/>
        <dbReference type="ChEBI" id="CHEBI:15377"/>
        <dbReference type="ChEBI" id="CHEBI:15378"/>
        <dbReference type="ChEBI" id="CHEBI:43474"/>
        <dbReference type="ChEBI" id="CHEBI:58405"/>
        <dbReference type="ChEBI" id="CHEBI:60392"/>
        <dbReference type="EC" id="3.6.1.27"/>
    </reaction>
</comment>
<comment type="subcellular location">
    <subcellularLocation>
        <location evidence="1">Cell inner membrane</location>
        <topology evidence="1">Multi-pass membrane protein</topology>
    </subcellularLocation>
</comment>
<comment type="miscellaneous">
    <text>Bacitracin is thought to be involved in the inhibition of peptidoglycan synthesis by sequestering undecaprenyl diphosphate, thereby reducing the pool of lipid carrier available.</text>
</comment>
<comment type="similarity">
    <text evidence="1">Belongs to the UppP family.</text>
</comment>
<sequence length="272" mass="29483">MTDMYSLFVAFILGVVEGLTEFLPVSSTGHMIIVGELLGFTGDKAKTFEVIIQLGSILAVVVVFWRRLFGLIGIHFGAVPHEGKTNGHLTLGHILLAMIPAVILGLAFHDVIKALFDPKSVMYALVAGGVLLLAAEWLKPKNPKAVGLDDITYRQAFAIGCFQCLALWPGFSRSGATISGGMLVGVNRYAASEFSFILAVPMMIGASGLDLYKSLHFLTLGDLPMFAVGFITAFIVALIAIKTFLSLIKRISFVPFAIYRFIVAAVVYWVFM</sequence>